<gene>
    <name type="primary">SKIP22</name>
    <name type="ordered locus">At1g23780</name>
    <name type="ORF">F5O8.33</name>
</gene>
<organism>
    <name type="scientific">Arabidopsis thaliana</name>
    <name type="common">Mouse-ear cress</name>
    <dbReference type="NCBI Taxonomy" id="3702"/>
    <lineage>
        <taxon>Eukaryota</taxon>
        <taxon>Viridiplantae</taxon>
        <taxon>Streptophyta</taxon>
        <taxon>Embryophyta</taxon>
        <taxon>Tracheophyta</taxon>
        <taxon>Spermatophyta</taxon>
        <taxon>Magnoliopsida</taxon>
        <taxon>eudicotyledons</taxon>
        <taxon>Gunneridae</taxon>
        <taxon>Pentapetalae</taxon>
        <taxon>rosids</taxon>
        <taxon>malvids</taxon>
        <taxon>Brassicales</taxon>
        <taxon>Brassicaceae</taxon>
        <taxon>Camelineae</taxon>
        <taxon>Arabidopsis</taxon>
    </lineage>
</organism>
<dbReference type="EMBL" id="AC005990">
    <property type="protein sequence ID" value="AAC98033.1"/>
    <property type="molecule type" value="Genomic_DNA"/>
</dbReference>
<dbReference type="EMBL" id="CP002684">
    <property type="protein sequence ID" value="AEE30431.1"/>
    <property type="molecule type" value="Genomic_DNA"/>
</dbReference>
<dbReference type="EMBL" id="AY049291">
    <property type="protein sequence ID" value="AAK83633.1"/>
    <property type="molecule type" value="mRNA"/>
</dbReference>
<dbReference type="EMBL" id="AY149929">
    <property type="protein sequence ID" value="AAN31083.1"/>
    <property type="molecule type" value="mRNA"/>
</dbReference>
<dbReference type="EMBL" id="AK317590">
    <property type="protein sequence ID" value="BAH20254.1"/>
    <property type="molecule type" value="mRNA"/>
</dbReference>
<dbReference type="PIR" id="A86372">
    <property type="entry name" value="A86372"/>
</dbReference>
<dbReference type="RefSeq" id="NP_564203.1">
    <property type="nucleotide sequence ID" value="NM_102226.3"/>
</dbReference>
<dbReference type="SMR" id="Q9ZUB8"/>
<dbReference type="BioGRID" id="24227">
    <property type="interactions" value="8"/>
</dbReference>
<dbReference type="FunCoup" id="Q9ZUB8">
    <property type="interactions" value="2523"/>
</dbReference>
<dbReference type="IntAct" id="Q9ZUB8">
    <property type="interactions" value="3"/>
</dbReference>
<dbReference type="STRING" id="3702.Q9ZUB8"/>
<dbReference type="PaxDb" id="3702-AT1G23780.1"/>
<dbReference type="ProteomicsDB" id="232635"/>
<dbReference type="EnsemblPlants" id="AT1G23780.1">
    <property type="protein sequence ID" value="AT1G23780.1"/>
    <property type="gene ID" value="AT1G23780"/>
</dbReference>
<dbReference type="GeneID" id="838989"/>
<dbReference type="Gramene" id="AT1G23780.1">
    <property type="protein sequence ID" value="AT1G23780.1"/>
    <property type="gene ID" value="AT1G23780"/>
</dbReference>
<dbReference type="KEGG" id="ath:AT1G23780"/>
<dbReference type="Araport" id="AT1G23780"/>
<dbReference type="TAIR" id="AT1G23780"/>
<dbReference type="eggNOG" id="ENOG502QTNJ">
    <property type="taxonomic scope" value="Eukaryota"/>
</dbReference>
<dbReference type="HOGENOM" id="CLU_037173_0_0_1"/>
<dbReference type="InParanoid" id="Q9ZUB8"/>
<dbReference type="OMA" id="QRPNLPH"/>
<dbReference type="PhylomeDB" id="Q9ZUB8"/>
<dbReference type="UniPathway" id="UPA00143"/>
<dbReference type="PRO" id="PR:Q9ZUB8"/>
<dbReference type="Proteomes" id="UP000006548">
    <property type="component" value="Chromosome 1"/>
</dbReference>
<dbReference type="ExpressionAtlas" id="Q9ZUB8">
    <property type="expression patterns" value="baseline and differential"/>
</dbReference>
<dbReference type="GO" id="GO:0005634">
    <property type="term" value="C:nucleus"/>
    <property type="evidence" value="ECO:0007669"/>
    <property type="project" value="UniProtKB-SubCell"/>
</dbReference>
<dbReference type="GO" id="GO:0016567">
    <property type="term" value="P:protein ubiquitination"/>
    <property type="evidence" value="ECO:0007669"/>
    <property type="project" value="UniProtKB-UniPathway"/>
</dbReference>
<dbReference type="CDD" id="cd22165">
    <property type="entry name" value="F-box_AtSKIP22-like"/>
    <property type="match status" value="1"/>
</dbReference>
<dbReference type="Gene3D" id="1.20.1280.50">
    <property type="match status" value="1"/>
</dbReference>
<dbReference type="Gene3D" id="3.40.1000.30">
    <property type="match status" value="1"/>
</dbReference>
<dbReference type="InterPro" id="IPR036047">
    <property type="entry name" value="F-box-like_dom_sf"/>
</dbReference>
<dbReference type="InterPro" id="IPR001810">
    <property type="entry name" value="F-box_dom"/>
</dbReference>
<dbReference type="PANTHER" id="PTHR47602">
    <property type="entry name" value="F-BOX PROTEIN SKIP22"/>
    <property type="match status" value="1"/>
</dbReference>
<dbReference type="PANTHER" id="PTHR47602:SF2">
    <property type="entry name" value="F-BOX PROTEIN SKIP22"/>
    <property type="match status" value="1"/>
</dbReference>
<dbReference type="Pfam" id="PF12937">
    <property type="entry name" value="F-box-like"/>
    <property type="match status" value="1"/>
</dbReference>
<dbReference type="SMART" id="SM00256">
    <property type="entry name" value="FBOX"/>
    <property type="match status" value="1"/>
</dbReference>
<dbReference type="SUPFAM" id="SSF81383">
    <property type="entry name" value="F-box domain"/>
    <property type="match status" value="1"/>
</dbReference>
<dbReference type="PROSITE" id="PS50181">
    <property type="entry name" value="FBOX"/>
    <property type="match status" value="1"/>
</dbReference>
<evidence type="ECO:0000250" key="1"/>
<evidence type="ECO:0000255" key="2">
    <source>
        <dbReference type="PROSITE-ProRule" id="PRU00080"/>
    </source>
</evidence>
<evidence type="ECO:0000256" key="3">
    <source>
        <dbReference type="SAM" id="MobiDB-lite"/>
    </source>
</evidence>
<evidence type="ECO:0000269" key="4">
    <source>
    </source>
</evidence>
<evidence type="ECO:0000305" key="5"/>
<feature type="chain" id="PRO_0000283296" description="F-box protein SKIP22">
    <location>
        <begin position="1"/>
        <end position="475"/>
    </location>
</feature>
<feature type="domain" description="F-box" evidence="2">
    <location>
        <begin position="319"/>
        <end position="365"/>
    </location>
</feature>
<feature type="region of interest" description="Disordered" evidence="3">
    <location>
        <begin position="114"/>
        <end position="133"/>
    </location>
</feature>
<feature type="sequence conflict" description="In Ref. 4; BAH20254." evidence="5" ref="4">
    <original>V</original>
    <variation>M</variation>
    <location>
        <position position="194"/>
    </location>
</feature>
<feature type="sequence conflict" description="In Ref. 4; BAH20254." evidence="5" ref="4">
    <original>S</original>
    <variation>Y</variation>
    <location>
        <position position="224"/>
    </location>
</feature>
<feature type="sequence conflict" description="In Ref. 4; BAH20254." evidence="5" ref="4">
    <original>Q</original>
    <variation>E</variation>
    <location>
        <position position="463"/>
    </location>
</feature>
<proteinExistence type="evidence at protein level"/>
<protein>
    <recommendedName>
        <fullName>F-box protein SKIP22</fullName>
    </recommendedName>
    <alternativeName>
        <fullName>SKP1-interacting partner 22</fullName>
    </alternativeName>
</protein>
<reference key="1">
    <citation type="journal article" date="2000" name="Nature">
        <title>Sequence and analysis of chromosome 1 of the plant Arabidopsis thaliana.</title>
        <authorList>
            <person name="Theologis A."/>
            <person name="Ecker J.R."/>
            <person name="Palm C.J."/>
            <person name="Federspiel N.A."/>
            <person name="Kaul S."/>
            <person name="White O."/>
            <person name="Alonso J."/>
            <person name="Altafi H."/>
            <person name="Araujo R."/>
            <person name="Bowman C.L."/>
            <person name="Brooks S.Y."/>
            <person name="Buehler E."/>
            <person name="Chan A."/>
            <person name="Chao Q."/>
            <person name="Chen H."/>
            <person name="Cheuk R.F."/>
            <person name="Chin C.W."/>
            <person name="Chung M.K."/>
            <person name="Conn L."/>
            <person name="Conway A.B."/>
            <person name="Conway A.R."/>
            <person name="Creasy T.H."/>
            <person name="Dewar K."/>
            <person name="Dunn P."/>
            <person name="Etgu P."/>
            <person name="Feldblyum T.V."/>
            <person name="Feng J.-D."/>
            <person name="Fong B."/>
            <person name="Fujii C.Y."/>
            <person name="Gill J.E."/>
            <person name="Goldsmith A.D."/>
            <person name="Haas B."/>
            <person name="Hansen N.F."/>
            <person name="Hughes B."/>
            <person name="Huizar L."/>
            <person name="Hunter J.L."/>
            <person name="Jenkins J."/>
            <person name="Johnson-Hopson C."/>
            <person name="Khan S."/>
            <person name="Khaykin E."/>
            <person name="Kim C.J."/>
            <person name="Koo H.L."/>
            <person name="Kremenetskaia I."/>
            <person name="Kurtz D.B."/>
            <person name="Kwan A."/>
            <person name="Lam B."/>
            <person name="Langin-Hooper S."/>
            <person name="Lee A."/>
            <person name="Lee J.M."/>
            <person name="Lenz C.A."/>
            <person name="Li J.H."/>
            <person name="Li Y.-P."/>
            <person name="Lin X."/>
            <person name="Liu S.X."/>
            <person name="Liu Z.A."/>
            <person name="Luros J.S."/>
            <person name="Maiti R."/>
            <person name="Marziali A."/>
            <person name="Militscher J."/>
            <person name="Miranda M."/>
            <person name="Nguyen M."/>
            <person name="Nierman W.C."/>
            <person name="Osborne B.I."/>
            <person name="Pai G."/>
            <person name="Peterson J."/>
            <person name="Pham P.K."/>
            <person name="Rizzo M."/>
            <person name="Rooney T."/>
            <person name="Rowley D."/>
            <person name="Sakano H."/>
            <person name="Salzberg S.L."/>
            <person name="Schwartz J.R."/>
            <person name="Shinn P."/>
            <person name="Southwick A.M."/>
            <person name="Sun H."/>
            <person name="Tallon L.J."/>
            <person name="Tambunga G."/>
            <person name="Toriumi M.J."/>
            <person name="Town C.D."/>
            <person name="Utterback T."/>
            <person name="Van Aken S."/>
            <person name="Vaysberg M."/>
            <person name="Vysotskaia V.S."/>
            <person name="Walker M."/>
            <person name="Wu D."/>
            <person name="Yu G."/>
            <person name="Fraser C.M."/>
            <person name="Venter J.C."/>
            <person name="Davis R.W."/>
        </authorList>
    </citation>
    <scope>NUCLEOTIDE SEQUENCE [LARGE SCALE GENOMIC DNA]</scope>
    <source>
        <strain>cv. Columbia</strain>
    </source>
</reference>
<reference key="2">
    <citation type="journal article" date="2017" name="Plant J.">
        <title>Araport11: a complete reannotation of the Arabidopsis thaliana reference genome.</title>
        <authorList>
            <person name="Cheng C.Y."/>
            <person name="Krishnakumar V."/>
            <person name="Chan A.P."/>
            <person name="Thibaud-Nissen F."/>
            <person name="Schobel S."/>
            <person name="Town C.D."/>
        </authorList>
    </citation>
    <scope>GENOME REANNOTATION</scope>
    <source>
        <strain>cv. Columbia</strain>
    </source>
</reference>
<reference key="3">
    <citation type="journal article" date="2003" name="Science">
        <title>Empirical analysis of transcriptional activity in the Arabidopsis genome.</title>
        <authorList>
            <person name="Yamada K."/>
            <person name="Lim J."/>
            <person name="Dale J.M."/>
            <person name="Chen H."/>
            <person name="Shinn P."/>
            <person name="Palm C.J."/>
            <person name="Southwick A.M."/>
            <person name="Wu H.C."/>
            <person name="Kim C.J."/>
            <person name="Nguyen M."/>
            <person name="Pham P.K."/>
            <person name="Cheuk R.F."/>
            <person name="Karlin-Newmann G."/>
            <person name="Liu S.X."/>
            <person name="Lam B."/>
            <person name="Sakano H."/>
            <person name="Wu T."/>
            <person name="Yu G."/>
            <person name="Miranda M."/>
            <person name="Quach H.L."/>
            <person name="Tripp M."/>
            <person name="Chang C.H."/>
            <person name="Lee J.M."/>
            <person name="Toriumi M.J."/>
            <person name="Chan M.M."/>
            <person name="Tang C.C."/>
            <person name="Onodera C.S."/>
            <person name="Deng J.M."/>
            <person name="Akiyama K."/>
            <person name="Ansari Y."/>
            <person name="Arakawa T."/>
            <person name="Banh J."/>
            <person name="Banno F."/>
            <person name="Bowser L."/>
            <person name="Brooks S.Y."/>
            <person name="Carninci P."/>
            <person name="Chao Q."/>
            <person name="Choy N."/>
            <person name="Enju A."/>
            <person name="Goldsmith A.D."/>
            <person name="Gurjal M."/>
            <person name="Hansen N.F."/>
            <person name="Hayashizaki Y."/>
            <person name="Johnson-Hopson C."/>
            <person name="Hsuan V.W."/>
            <person name="Iida K."/>
            <person name="Karnes M."/>
            <person name="Khan S."/>
            <person name="Koesema E."/>
            <person name="Ishida J."/>
            <person name="Jiang P.X."/>
            <person name="Jones T."/>
            <person name="Kawai J."/>
            <person name="Kamiya A."/>
            <person name="Meyers C."/>
            <person name="Nakajima M."/>
            <person name="Narusaka M."/>
            <person name="Seki M."/>
            <person name="Sakurai T."/>
            <person name="Satou M."/>
            <person name="Tamse R."/>
            <person name="Vaysberg M."/>
            <person name="Wallender E.K."/>
            <person name="Wong C."/>
            <person name="Yamamura Y."/>
            <person name="Yuan S."/>
            <person name="Shinozaki K."/>
            <person name="Davis R.W."/>
            <person name="Theologis A."/>
            <person name="Ecker J.R."/>
        </authorList>
    </citation>
    <scope>NUCLEOTIDE SEQUENCE [LARGE SCALE MRNA]</scope>
    <source>
        <strain>cv. Columbia</strain>
    </source>
</reference>
<reference key="4">
    <citation type="journal article" date="2009" name="DNA Res.">
        <title>Analysis of multiple occurrences of alternative splicing events in Arabidopsis thaliana using novel sequenced full-length cDNAs.</title>
        <authorList>
            <person name="Iida K."/>
            <person name="Fukami-Kobayashi K."/>
            <person name="Toyoda A."/>
            <person name="Sakaki Y."/>
            <person name="Kobayashi M."/>
            <person name="Seki M."/>
            <person name="Shinozaki K."/>
        </authorList>
    </citation>
    <scope>NUCLEOTIDE SEQUENCE [LARGE SCALE MRNA] OF 193-475</scope>
    <source>
        <strain>cv. Columbia</strain>
    </source>
</reference>
<reference key="5">
    <citation type="journal article" date="2003" name="Plant J.">
        <title>Protein interaction analysis of SCF ubiquitin E3 ligase subunits from Arabidopsis.</title>
        <authorList>
            <person name="Risseeuw E.P."/>
            <person name="Daskalchuk T.E."/>
            <person name="Banks T.W."/>
            <person name="Liu E."/>
            <person name="Cotelesage J."/>
            <person name="Hellmann H."/>
            <person name="Estelle M."/>
            <person name="Somers D.E."/>
            <person name="Crosby W.L."/>
        </authorList>
    </citation>
    <scope>INTERACTION WITH SKP1A/ASK1 AND SPK1B/ASK2</scope>
</reference>
<comment type="function">
    <text evidence="1">Component of SCF(ASK-cullin-F-box) E3 ubiquitin ligase complexes, which may mediate the ubiquitination and subsequent proteasomal degradation of target proteins.</text>
</comment>
<comment type="pathway">
    <text>Protein modification; protein ubiquitination.</text>
</comment>
<comment type="subunit">
    <text evidence="1 4">Part of a SCF (ASK-cullin-F-box) protein ligase complex (By similarity). Interacts with SKP1A/ASK1 and SPK1B/ASK2.</text>
</comment>
<comment type="subcellular location">
    <subcellularLocation>
        <location evidence="1">Nucleus</location>
    </subcellularLocation>
</comment>
<comment type="domain">
    <text evidence="1">The F-box is necessary for the interaction with ASK proteins.</text>
</comment>
<accession>Q9ZUB8</accession>
<accession>B9DHN7</accession>
<keyword id="KW-0539">Nucleus</keyword>
<keyword id="KW-1185">Reference proteome</keyword>
<keyword id="KW-0833">Ubl conjugation pathway</keyword>
<sequence>MKLRLRHHETRETLKLELADADTLHDLRRRINPTVPSSVHLSLNRKDELITPSPEDTLRSLGLISGDLIYFSLEAGESSNWKLRDSETVASQSESNQTSVHDSIGFAEVDVVPDQAKSNPNTSVEDPEGDISGMEGPEPMDVEQLDMELAAAGSKRLSEPFFLKNILLEKSGDTSELTTLALSVHAVMLESGFVLLNHGSDKFNFSKELLTVSLRYTLPELIKSKDTNTIESVSVKFQNLGPVVVVYGTVGGSSGRVHMNLDKRRFVPVIDLVMDTSTSDEEGSSSIYREVFMFWRMVKDRLVIPLLIGICDKAGLEPPPCLMRLPTELKLKILELLPGVSIGNMACVCTEMRYLASDNDLWKQKCLEEVNNFVVTEAGDSVNWKARFATFWRQKQLAAASDTFWRQNQLGRRNISTGRSGIRFPRIIGDPPFTWFNGDRMHGSIGIHPGQSARGLGRRTWGQLFTPRCNLGGLN</sequence>
<name>SKI22_ARATH</name>